<accession>Q9P2Q2</accession>
<accession>A7E2Y3</accession>
<accession>Q5T377</accession>
<comment type="function">
    <text evidence="2 7">Scaffolding protein that regulates epithelial cell polarity by connecting ARF6 activation with the PAR3 complex (By similarity). Plays a redundant role with FRMD4B in epithelial polarization (By similarity). May regulate MAPT secretion by activating ARF6-signaling (PubMed:27044754).</text>
</comment>
<comment type="subunit">
    <text evidence="2">Interacts (via coiled-coil domain) with CYTH1 (via coiled-coil domain). Interacts with PARD3 (via coiled-coil domain). Found in a complex with PARD3, CYTH1 and FRMD4A. Interacts with CYTH2. Interacts with CYTH3.</text>
</comment>
<comment type="subcellular location">
    <subcellularLocation>
        <location evidence="1">Cytoplasm</location>
        <location evidence="1">Cytoskeleton</location>
    </subcellularLocation>
    <subcellularLocation>
        <location evidence="2">Cell junction</location>
        <location evidence="2">Adherens junction</location>
    </subcellularLocation>
    <subcellularLocation>
        <location evidence="2">Cell junction</location>
        <location evidence="2">Tight junction</location>
    </subcellularLocation>
    <text evidence="2">Colocalized with CYTH1 at adherens junction and tight junction. Colocalized with PARD3 during the process of epithelial polarization.</text>
</comment>
<comment type="disease" evidence="6">
    <disease id="DI-04654">
        <name>Agenesis of the corpus callosum, with facial anomalies and cerebellar ataxia</name>
        <acronym>CCAFCA</acronym>
        <description>An autosomal recessive intellectual disability syndrome characterized by congenital microcephaly, low anterior hairline, bitemporal narrowing, low-set protruding ears, strabismus and tented thick eyebrows with sparse hair in their medial segment.</description>
        <dbReference type="MIM" id="616819"/>
    </disease>
    <text>The disease is caused by variants affecting the gene represented in this entry.</text>
</comment>
<comment type="caution">
    <text evidence="8">It is uncertain whether Met-1 or Met-16 is the initiator.</text>
</comment>
<comment type="sequence caution" evidence="8">
    <conflict type="erroneous initiation">
        <sequence resource="EMBL-CDS" id="BAA92532"/>
    </conflict>
</comment>
<dbReference type="EMBL" id="AB037715">
    <property type="protein sequence ID" value="BAA92532.1"/>
    <property type="status" value="ALT_INIT"/>
    <property type="molecule type" value="mRNA"/>
</dbReference>
<dbReference type="EMBL" id="AK289693">
    <property type="protein sequence ID" value="BAF82382.1"/>
    <property type="molecule type" value="mRNA"/>
</dbReference>
<dbReference type="EMBL" id="AC069025">
    <property type="status" value="NOT_ANNOTATED_CDS"/>
    <property type="molecule type" value="Genomic_DNA"/>
</dbReference>
<dbReference type="EMBL" id="AL157392">
    <property type="status" value="NOT_ANNOTATED_CDS"/>
    <property type="molecule type" value="Genomic_DNA"/>
</dbReference>
<dbReference type="EMBL" id="AL365495">
    <property type="status" value="NOT_ANNOTATED_CDS"/>
    <property type="molecule type" value="Genomic_DNA"/>
</dbReference>
<dbReference type="EMBL" id="BC151244">
    <property type="protein sequence ID" value="AAI51245.1"/>
    <property type="molecule type" value="mRNA"/>
</dbReference>
<dbReference type="CCDS" id="CCDS7101.1"/>
<dbReference type="RefSeq" id="NP_001305265.1">
    <property type="nucleotide sequence ID" value="NM_001318336.1"/>
</dbReference>
<dbReference type="RefSeq" id="NP_001305266.1">
    <property type="nucleotide sequence ID" value="NM_001318337.1"/>
</dbReference>
<dbReference type="RefSeq" id="NP_001305267.1">
    <property type="nucleotide sequence ID" value="NM_001318338.1"/>
</dbReference>
<dbReference type="RefSeq" id="NP_060497.3">
    <property type="nucleotide sequence ID" value="NM_018027.4"/>
</dbReference>
<dbReference type="SMR" id="Q9P2Q2"/>
<dbReference type="BioGRID" id="120817">
    <property type="interactions" value="16"/>
</dbReference>
<dbReference type="FunCoup" id="Q9P2Q2">
    <property type="interactions" value="280"/>
</dbReference>
<dbReference type="IntAct" id="Q9P2Q2">
    <property type="interactions" value="12"/>
</dbReference>
<dbReference type="STRING" id="9606.ENSP00000350032"/>
<dbReference type="GlyGen" id="Q9P2Q2">
    <property type="glycosylation" value="1 site"/>
</dbReference>
<dbReference type="iPTMnet" id="Q9P2Q2"/>
<dbReference type="PhosphoSitePlus" id="Q9P2Q2"/>
<dbReference type="BioMuta" id="FRMD4A"/>
<dbReference type="DMDM" id="205371790"/>
<dbReference type="jPOST" id="Q9P2Q2"/>
<dbReference type="MassIVE" id="Q9P2Q2"/>
<dbReference type="PaxDb" id="9606-ENSP00000350032"/>
<dbReference type="PeptideAtlas" id="Q9P2Q2"/>
<dbReference type="ProteomicsDB" id="83879"/>
<dbReference type="Antibodypedia" id="50861">
    <property type="antibodies" value="42 antibodies from 9 providers"/>
</dbReference>
<dbReference type="DNASU" id="55691"/>
<dbReference type="Ensembl" id="ENST00000357447.7">
    <property type="protein sequence ID" value="ENSP00000350032.2"/>
    <property type="gene ID" value="ENSG00000151474.23"/>
</dbReference>
<dbReference type="GeneID" id="55691"/>
<dbReference type="KEGG" id="hsa:55691"/>
<dbReference type="MANE-Select" id="ENST00000357447.7">
    <property type="protein sequence ID" value="ENSP00000350032.2"/>
    <property type="RefSeq nucleotide sequence ID" value="NM_018027.5"/>
    <property type="RefSeq protein sequence ID" value="NP_060497.3"/>
</dbReference>
<dbReference type="UCSC" id="uc001ims.4">
    <property type="organism name" value="human"/>
</dbReference>
<dbReference type="AGR" id="HGNC:25491"/>
<dbReference type="CTD" id="55691"/>
<dbReference type="DisGeNET" id="55691"/>
<dbReference type="GeneCards" id="FRMD4A"/>
<dbReference type="HGNC" id="HGNC:25491">
    <property type="gene designation" value="FRMD4A"/>
</dbReference>
<dbReference type="HPA" id="ENSG00000151474">
    <property type="expression patterns" value="Tissue enhanced (adipose)"/>
</dbReference>
<dbReference type="MalaCards" id="FRMD4A"/>
<dbReference type="MIM" id="616305">
    <property type="type" value="gene"/>
</dbReference>
<dbReference type="MIM" id="616819">
    <property type="type" value="phenotype"/>
</dbReference>
<dbReference type="neXtProt" id="NX_Q9P2Q2"/>
<dbReference type="OpenTargets" id="ENSG00000151474"/>
<dbReference type="Orphanet" id="466688">
    <property type="disease" value="Severe intellectual disability-corpus callosum agenesis-facial dysmorphism-cerebellar ataxia syndrome"/>
</dbReference>
<dbReference type="PharmGKB" id="PA134946784"/>
<dbReference type="VEuPathDB" id="HostDB:ENSG00000151474"/>
<dbReference type="eggNOG" id="KOG3529">
    <property type="taxonomic scope" value="Eukaryota"/>
</dbReference>
<dbReference type="GeneTree" id="ENSGT01020000230354"/>
<dbReference type="InParanoid" id="Q9P2Q2"/>
<dbReference type="OMA" id="HILTWRT"/>
<dbReference type="OrthoDB" id="9484040at2759"/>
<dbReference type="PAN-GO" id="Q9P2Q2">
    <property type="GO annotations" value="2 GO annotations based on evolutionary models"/>
</dbReference>
<dbReference type="PhylomeDB" id="Q9P2Q2"/>
<dbReference type="TreeFam" id="TF328984"/>
<dbReference type="PathwayCommons" id="Q9P2Q2"/>
<dbReference type="SignaLink" id="Q9P2Q2"/>
<dbReference type="BioGRID-ORCS" id="55691">
    <property type="hits" value="9 hits in 1152 CRISPR screens"/>
</dbReference>
<dbReference type="ChiTaRS" id="FRMD4A">
    <property type="organism name" value="human"/>
</dbReference>
<dbReference type="GenomeRNAi" id="55691"/>
<dbReference type="Pharos" id="Q9P2Q2">
    <property type="development level" value="Tbio"/>
</dbReference>
<dbReference type="PRO" id="PR:Q9P2Q2"/>
<dbReference type="Proteomes" id="UP000005640">
    <property type="component" value="Chromosome 10"/>
</dbReference>
<dbReference type="RNAct" id="Q9P2Q2">
    <property type="molecule type" value="protein"/>
</dbReference>
<dbReference type="Bgee" id="ENSG00000151474">
    <property type="expression patterns" value="Expressed in sural nerve and 183 other cell types or tissues"/>
</dbReference>
<dbReference type="ExpressionAtlas" id="Q9P2Q2">
    <property type="expression patterns" value="baseline and differential"/>
</dbReference>
<dbReference type="GO" id="GO:0005912">
    <property type="term" value="C:adherens junction"/>
    <property type="evidence" value="ECO:0000318"/>
    <property type="project" value="GO_Central"/>
</dbReference>
<dbReference type="GO" id="GO:0005923">
    <property type="term" value="C:bicellular tight junction"/>
    <property type="evidence" value="ECO:0000318"/>
    <property type="project" value="GO_Central"/>
</dbReference>
<dbReference type="GO" id="GO:0005737">
    <property type="term" value="C:cytoplasm"/>
    <property type="evidence" value="ECO:0000315"/>
    <property type="project" value="UniProtKB"/>
</dbReference>
<dbReference type="GO" id="GO:0005856">
    <property type="term" value="C:cytoskeleton"/>
    <property type="evidence" value="ECO:0007669"/>
    <property type="project" value="UniProtKB-SubCell"/>
</dbReference>
<dbReference type="GO" id="GO:0030674">
    <property type="term" value="F:protein-macromolecule adaptor activity"/>
    <property type="evidence" value="ECO:0007669"/>
    <property type="project" value="Ensembl"/>
</dbReference>
<dbReference type="GO" id="GO:0090162">
    <property type="term" value="P:establishment of epithelial cell polarity"/>
    <property type="evidence" value="ECO:0007669"/>
    <property type="project" value="Ensembl"/>
</dbReference>
<dbReference type="GO" id="GO:0050709">
    <property type="term" value="P:negative regulation of protein secretion"/>
    <property type="evidence" value="ECO:0007669"/>
    <property type="project" value="Ensembl"/>
</dbReference>
<dbReference type="GO" id="GO:0050714">
    <property type="term" value="P:positive regulation of protein secretion"/>
    <property type="evidence" value="ECO:0000315"/>
    <property type="project" value="UniProtKB"/>
</dbReference>
<dbReference type="CDD" id="cd14473">
    <property type="entry name" value="FERM_B-lobe"/>
    <property type="match status" value="1"/>
</dbReference>
<dbReference type="CDD" id="cd13191">
    <property type="entry name" value="FERM_C_FRMD4A_FRMD4B"/>
    <property type="match status" value="1"/>
</dbReference>
<dbReference type="CDD" id="cd17200">
    <property type="entry name" value="FERM_F1_FRMD4B"/>
    <property type="match status" value="1"/>
</dbReference>
<dbReference type="FunFam" id="1.20.80.10:FF:000008">
    <property type="entry name" value="FERM domain containing 4A"/>
    <property type="match status" value="1"/>
</dbReference>
<dbReference type="FunFam" id="3.10.20.90:FF:000019">
    <property type="entry name" value="FERM domain containing 4A"/>
    <property type="match status" value="1"/>
</dbReference>
<dbReference type="FunFam" id="2.30.29.30:FF:000022">
    <property type="entry name" value="Putative FERM domain-containing protein 4A"/>
    <property type="match status" value="1"/>
</dbReference>
<dbReference type="Gene3D" id="1.20.80.10">
    <property type="match status" value="1"/>
</dbReference>
<dbReference type="Gene3D" id="3.10.20.90">
    <property type="entry name" value="Phosphatidylinositol 3-kinase Catalytic Subunit, Chain A, domain 1"/>
    <property type="match status" value="1"/>
</dbReference>
<dbReference type="Gene3D" id="2.30.29.30">
    <property type="entry name" value="Pleckstrin-homology domain (PH domain)/Phosphotyrosine-binding domain (PTB)"/>
    <property type="match status" value="1"/>
</dbReference>
<dbReference type="InterPro" id="IPR019749">
    <property type="entry name" value="Band_41_domain"/>
</dbReference>
<dbReference type="InterPro" id="IPR021774">
    <property type="entry name" value="CUPID"/>
</dbReference>
<dbReference type="InterPro" id="IPR014352">
    <property type="entry name" value="FERM/acyl-CoA-bd_prot_sf"/>
</dbReference>
<dbReference type="InterPro" id="IPR035963">
    <property type="entry name" value="FERM_2"/>
</dbReference>
<dbReference type="InterPro" id="IPR019748">
    <property type="entry name" value="FERM_central"/>
</dbReference>
<dbReference type="InterPro" id="IPR019747">
    <property type="entry name" value="FERM_CS"/>
</dbReference>
<dbReference type="InterPro" id="IPR000299">
    <property type="entry name" value="FERM_domain"/>
</dbReference>
<dbReference type="InterPro" id="IPR018979">
    <property type="entry name" value="FERM_N"/>
</dbReference>
<dbReference type="InterPro" id="IPR018980">
    <property type="entry name" value="FERM_PH-like_C"/>
</dbReference>
<dbReference type="InterPro" id="IPR047176">
    <property type="entry name" value="FRMD4A/B"/>
</dbReference>
<dbReference type="InterPro" id="IPR041785">
    <property type="entry name" value="FRMD4A/B_FERM_C"/>
</dbReference>
<dbReference type="InterPro" id="IPR011993">
    <property type="entry name" value="PH-like_dom_sf"/>
</dbReference>
<dbReference type="InterPro" id="IPR029071">
    <property type="entry name" value="Ubiquitin-like_domsf"/>
</dbReference>
<dbReference type="PANTHER" id="PTHR46079">
    <property type="entry name" value="FERM DOMAIN-CONTAINING PROTEIN 4"/>
    <property type="match status" value="1"/>
</dbReference>
<dbReference type="PANTHER" id="PTHR46079:SF3">
    <property type="entry name" value="FERM DOMAIN-CONTAINING PROTEIN 4A"/>
    <property type="match status" value="1"/>
</dbReference>
<dbReference type="Pfam" id="PF11819">
    <property type="entry name" value="CUPID"/>
    <property type="match status" value="1"/>
</dbReference>
<dbReference type="Pfam" id="PF09380">
    <property type="entry name" value="FERM_C"/>
    <property type="match status" value="1"/>
</dbReference>
<dbReference type="Pfam" id="PF00373">
    <property type="entry name" value="FERM_M"/>
    <property type="match status" value="1"/>
</dbReference>
<dbReference type="Pfam" id="PF09379">
    <property type="entry name" value="FERM_N"/>
    <property type="match status" value="1"/>
</dbReference>
<dbReference type="PRINTS" id="PR00935">
    <property type="entry name" value="BAND41"/>
</dbReference>
<dbReference type="SMART" id="SM00295">
    <property type="entry name" value="B41"/>
    <property type="match status" value="1"/>
</dbReference>
<dbReference type="SMART" id="SM01196">
    <property type="entry name" value="FERM_C"/>
    <property type="match status" value="1"/>
</dbReference>
<dbReference type="SUPFAM" id="SSF50729">
    <property type="entry name" value="PH domain-like"/>
    <property type="match status" value="1"/>
</dbReference>
<dbReference type="SUPFAM" id="SSF47031">
    <property type="entry name" value="Second domain of FERM"/>
    <property type="match status" value="1"/>
</dbReference>
<dbReference type="SUPFAM" id="SSF54236">
    <property type="entry name" value="Ubiquitin-like"/>
    <property type="match status" value="1"/>
</dbReference>
<dbReference type="PROSITE" id="PS00660">
    <property type="entry name" value="FERM_1"/>
    <property type="match status" value="1"/>
</dbReference>
<dbReference type="PROSITE" id="PS00661">
    <property type="entry name" value="FERM_2"/>
    <property type="match status" value="1"/>
</dbReference>
<dbReference type="PROSITE" id="PS50057">
    <property type="entry name" value="FERM_3"/>
    <property type="match status" value="1"/>
</dbReference>
<proteinExistence type="evidence at protein level"/>
<gene>
    <name evidence="9" type="primary">FRMD4A</name>
    <name type="synonym">FRMD4</name>
    <name type="synonym">KIAA1294</name>
</gene>
<feature type="chain" id="PRO_0000219444" description="FERM domain-containing protein 4A">
    <location>
        <begin position="1"/>
        <end position="1039"/>
    </location>
</feature>
<feature type="domain" description="FERM" evidence="4">
    <location>
        <begin position="20"/>
        <end position="322"/>
    </location>
</feature>
<feature type="region of interest" description="Necessary for interaction with CYTH1" evidence="2">
    <location>
        <begin position="358"/>
        <end position="420"/>
    </location>
</feature>
<feature type="region of interest" description="Disordered" evidence="5">
    <location>
        <begin position="366"/>
        <end position="386"/>
    </location>
</feature>
<feature type="region of interest" description="Disordered" evidence="5">
    <location>
        <begin position="553"/>
        <end position="680"/>
    </location>
</feature>
<feature type="region of interest" description="Necessary for tight junction and adherens junction localization; Requires for interaction with PARD3" evidence="2">
    <location>
        <begin position="579"/>
        <end position="939"/>
    </location>
</feature>
<feature type="region of interest" description="Disordered" evidence="5">
    <location>
        <begin position="713"/>
        <end position="756"/>
    </location>
</feature>
<feature type="region of interest" description="Disordered" evidence="5">
    <location>
        <begin position="772"/>
        <end position="813"/>
    </location>
</feature>
<feature type="region of interest" description="Disordered" evidence="5">
    <location>
        <begin position="879"/>
        <end position="968"/>
    </location>
</feature>
<feature type="region of interest" description="Disordered" evidence="5">
    <location>
        <begin position="980"/>
        <end position="1039"/>
    </location>
</feature>
<feature type="coiled-coil region" evidence="3">
    <location>
        <begin position="382"/>
        <end position="416"/>
    </location>
</feature>
<feature type="compositionally biased region" description="Low complexity" evidence="5">
    <location>
        <begin position="366"/>
        <end position="382"/>
    </location>
</feature>
<feature type="compositionally biased region" description="Pro residues" evidence="5">
    <location>
        <begin position="571"/>
        <end position="586"/>
    </location>
</feature>
<feature type="compositionally biased region" description="Basic residues" evidence="5">
    <location>
        <begin position="623"/>
        <end position="638"/>
    </location>
</feature>
<feature type="compositionally biased region" description="Low complexity" evidence="5">
    <location>
        <begin position="788"/>
        <end position="800"/>
    </location>
</feature>
<feature type="compositionally biased region" description="Polar residues" evidence="5">
    <location>
        <begin position="896"/>
        <end position="905"/>
    </location>
</feature>
<feature type="compositionally biased region" description="Basic and acidic residues" evidence="5">
    <location>
        <begin position="912"/>
        <end position="929"/>
    </location>
</feature>
<feature type="compositionally biased region" description="Low complexity" evidence="5">
    <location>
        <begin position="946"/>
        <end position="966"/>
    </location>
</feature>
<feature type="compositionally biased region" description="Polar residues" evidence="5">
    <location>
        <begin position="986"/>
        <end position="1000"/>
    </location>
</feature>
<feature type="compositionally biased region" description="Polar residues" evidence="5">
    <location>
        <begin position="1013"/>
        <end position="1023"/>
    </location>
</feature>
<feature type="modified residue" description="Phosphoserine" evidence="11">
    <location>
        <position position="530"/>
    </location>
</feature>
<feature type="modified residue" description="Phosphoserine" evidence="10">
    <location>
        <position position="604"/>
    </location>
</feature>
<feature type="modified residue" description="Phosphoserine" evidence="10">
    <location>
        <position position="615"/>
    </location>
</feature>
<feature type="modified residue" description="Phosphoserine" evidence="11">
    <location>
        <position position="681"/>
    </location>
</feature>
<feature type="modified residue" description="Phosphoserine" evidence="2">
    <location>
        <position position="711"/>
    </location>
</feature>
<feature type="modified residue" description="Phosphoserine" evidence="10 11">
    <location>
        <position position="800"/>
    </location>
</feature>
<feature type="modified residue" description="Phosphoserine" evidence="10">
    <location>
        <position position="872"/>
    </location>
</feature>
<feature type="modified residue" description="Phosphoserine" evidence="10">
    <location>
        <position position="901"/>
    </location>
</feature>
<feature type="sequence variant" id="VAR_048367" description="In dbSNP:rs11258565.">
    <original>Q</original>
    <variation>H</variation>
    <location>
        <position position="242"/>
    </location>
</feature>
<feature type="sequence conflict" description="In Ref. 1; BAA92532 and 4; AAI51245." evidence="8" ref="1 4">
    <original>G</original>
    <variation>C</variation>
    <location>
        <position position="859"/>
    </location>
</feature>
<reference key="1">
    <citation type="journal article" date="2000" name="DNA Res.">
        <title>Prediction of the coding sequences of unidentified human genes. XVI. The complete sequences of 150 new cDNA clones from brain which code for large proteins in vitro.</title>
        <authorList>
            <person name="Nagase T."/>
            <person name="Kikuno R."/>
            <person name="Ishikawa K."/>
            <person name="Hirosawa M."/>
            <person name="Ohara O."/>
        </authorList>
    </citation>
    <scope>NUCLEOTIDE SEQUENCE [LARGE SCALE MRNA]</scope>
    <source>
        <tissue>Brain</tissue>
    </source>
</reference>
<reference key="2">
    <citation type="journal article" date="2004" name="Nat. Genet.">
        <title>Complete sequencing and characterization of 21,243 full-length human cDNAs.</title>
        <authorList>
            <person name="Ota T."/>
            <person name="Suzuki Y."/>
            <person name="Nishikawa T."/>
            <person name="Otsuki T."/>
            <person name="Sugiyama T."/>
            <person name="Irie R."/>
            <person name="Wakamatsu A."/>
            <person name="Hayashi K."/>
            <person name="Sato H."/>
            <person name="Nagai K."/>
            <person name="Kimura K."/>
            <person name="Makita H."/>
            <person name="Sekine M."/>
            <person name="Obayashi M."/>
            <person name="Nishi T."/>
            <person name="Shibahara T."/>
            <person name="Tanaka T."/>
            <person name="Ishii S."/>
            <person name="Yamamoto J."/>
            <person name="Saito K."/>
            <person name="Kawai Y."/>
            <person name="Isono Y."/>
            <person name="Nakamura Y."/>
            <person name="Nagahari K."/>
            <person name="Murakami K."/>
            <person name="Yasuda T."/>
            <person name="Iwayanagi T."/>
            <person name="Wagatsuma M."/>
            <person name="Shiratori A."/>
            <person name="Sudo H."/>
            <person name="Hosoiri T."/>
            <person name="Kaku Y."/>
            <person name="Kodaira H."/>
            <person name="Kondo H."/>
            <person name="Sugawara M."/>
            <person name="Takahashi M."/>
            <person name="Kanda K."/>
            <person name="Yokoi T."/>
            <person name="Furuya T."/>
            <person name="Kikkawa E."/>
            <person name="Omura Y."/>
            <person name="Abe K."/>
            <person name="Kamihara K."/>
            <person name="Katsuta N."/>
            <person name="Sato K."/>
            <person name="Tanikawa M."/>
            <person name="Yamazaki M."/>
            <person name="Ninomiya K."/>
            <person name="Ishibashi T."/>
            <person name="Yamashita H."/>
            <person name="Murakawa K."/>
            <person name="Fujimori K."/>
            <person name="Tanai H."/>
            <person name="Kimata M."/>
            <person name="Watanabe M."/>
            <person name="Hiraoka S."/>
            <person name="Chiba Y."/>
            <person name="Ishida S."/>
            <person name="Ono Y."/>
            <person name="Takiguchi S."/>
            <person name="Watanabe S."/>
            <person name="Yosida M."/>
            <person name="Hotuta T."/>
            <person name="Kusano J."/>
            <person name="Kanehori K."/>
            <person name="Takahashi-Fujii A."/>
            <person name="Hara H."/>
            <person name="Tanase T.-O."/>
            <person name="Nomura Y."/>
            <person name="Togiya S."/>
            <person name="Komai F."/>
            <person name="Hara R."/>
            <person name="Takeuchi K."/>
            <person name="Arita M."/>
            <person name="Imose N."/>
            <person name="Musashino K."/>
            <person name="Yuuki H."/>
            <person name="Oshima A."/>
            <person name="Sasaki N."/>
            <person name="Aotsuka S."/>
            <person name="Yoshikawa Y."/>
            <person name="Matsunawa H."/>
            <person name="Ichihara T."/>
            <person name="Shiohata N."/>
            <person name="Sano S."/>
            <person name="Moriya S."/>
            <person name="Momiyama H."/>
            <person name="Satoh N."/>
            <person name="Takami S."/>
            <person name="Terashima Y."/>
            <person name="Suzuki O."/>
            <person name="Nakagawa S."/>
            <person name="Senoh A."/>
            <person name="Mizoguchi H."/>
            <person name="Goto Y."/>
            <person name="Shimizu F."/>
            <person name="Wakebe H."/>
            <person name="Hishigaki H."/>
            <person name="Watanabe T."/>
            <person name="Sugiyama A."/>
            <person name="Takemoto M."/>
            <person name="Kawakami B."/>
            <person name="Yamazaki M."/>
            <person name="Watanabe K."/>
            <person name="Kumagai A."/>
            <person name="Itakura S."/>
            <person name="Fukuzumi Y."/>
            <person name="Fujimori Y."/>
            <person name="Komiyama M."/>
            <person name="Tashiro H."/>
            <person name="Tanigami A."/>
            <person name="Fujiwara T."/>
            <person name="Ono T."/>
            <person name="Yamada K."/>
            <person name="Fujii Y."/>
            <person name="Ozaki K."/>
            <person name="Hirao M."/>
            <person name="Ohmori Y."/>
            <person name="Kawabata A."/>
            <person name="Hikiji T."/>
            <person name="Kobatake N."/>
            <person name="Inagaki H."/>
            <person name="Ikema Y."/>
            <person name="Okamoto S."/>
            <person name="Okitani R."/>
            <person name="Kawakami T."/>
            <person name="Noguchi S."/>
            <person name="Itoh T."/>
            <person name="Shigeta K."/>
            <person name="Senba T."/>
            <person name="Matsumura K."/>
            <person name="Nakajima Y."/>
            <person name="Mizuno T."/>
            <person name="Morinaga M."/>
            <person name="Sasaki M."/>
            <person name="Togashi T."/>
            <person name="Oyama M."/>
            <person name="Hata H."/>
            <person name="Watanabe M."/>
            <person name="Komatsu T."/>
            <person name="Mizushima-Sugano J."/>
            <person name="Satoh T."/>
            <person name="Shirai Y."/>
            <person name="Takahashi Y."/>
            <person name="Nakagawa K."/>
            <person name="Okumura K."/>
            <person name="Nagase T."/>
            <person name="Nomura N."/>
            <person name="Kikuchi H."/>
            <person name="Masuho Y."/>
            <person name="Yamashita R."/>
            <person name="Nakai K."/>
            <person name="Yada T."/>
            <person name="Nakamura Y."/>
            <person name="Ohara O."/>
            <person name="Isogai T."/>
            <person name="Sugano S."/>
        </authorList>
    </citation>
    <scope>NUCLEOTIDE SEQUENCE [LARGE SCALE MRNA]</scope>
    <source>
        <tissue>Amygdala</tissue>
    </source>
</reference>
<reference key="3">
    <citation type="journal article" date="2004" name="Nature">
        <title>The DNA sequence and comparative analysis of human chromosome 10.</title>
        <authorList>
            <person name="Deloukas P."/>
            <person name="Earthrowl M.E."/>
            <person name="Grafham D.V."/>
            <person name="Rubenfield M."/>
            <person name="French L."/>
            <person name="Steward C.A."/>
            <person name="Sims S.K."/>
            <person name="Jones M.C."/>
            <person name="Searle S."/>
            <person name="Scott C."/>
            <person name="Howe K."/>
            <person name="Hunt S.E."/>
            <person name="Andrews T.D."/>
            <person name="Gilbert J.G.R."/>
            <person name="Swarbreck D."/>
            <person name="Ashurst J.L."/>
            <person name="Taylor A."/>
            <person name="Battles J."/>
            <person name="Bird C.P."/>
            <person name="Ainscough R."/>
            <person name="Almeida J.P."/>
            <person name="Ashwell R.I.S."/>
            <person name="Ambrose K.D."/>
            <person name="Babbage A.K."/>
            <person name="Bagguley C.L."/>
            <person name="Bailey J."/>
            <person name="Banerjee R."/>
            <person name="Bates K."/>
            <person name="Beasley H."/>
            <person name="Bray-Allen S."/>
            <person name="Brown A.J."/>
            <person name="Brown J.Y."/>
            <person name="Burford D.C."/>
            <person name="Burrill W."/>
            <person name="Burton J."/>
            <person name="Cahill P."/>
            <person name="Camire D."/>
            <person name="Carter N.P."/>
            <person name="Chapman J.C."/>
            <person name="Clark S.Y."/>
            <person name="Clarke G."/>
            <person name="Clee C.M."/>
            <person name="Clegg S."/>
            <person name="Corby N."/>
            <person name="Coulson A."/>
            <person name="Dhami P."/>
            <person name="Dutta I."/>
            <person name="Dunn M."/>
            <person name="Faulkner L."/>
            <person name="Frankish A."/>
            <person name="Frankland J.A."/>
            <person name="Garner P."/>
            <person name="Garnett J."/>
            <person name="Gribble S."/>
            <person name="Griffiths C."/>
            <person name="Grocock R."/>
            <person name="Gustafson E."/>
            <person name="Hammond S."/>
            <person name="Harley J.L."/>
            <person name="Hart E."/>
            <person name="Heath P.D."/>
            <person name="Ho T.P."/>
            <person name="Hopkins B."/>
            <person name="Horne J."/>
            <person name="Howden P.J."/>
            <person name="Huckle E."/>
            <person name="Hynds C."/>
            <person name="Johnson C."/>
            <person name="Johnson D."/>
            <person name="Kana A."/>
            <person name="Kay M."/>
            <person name="Kimberley A.M."/>
            <person name="Kershaw J.K."/>
            <person name="Kokkinaki M."/>
            <person name="Laird G.K."/>
            <person name="Lawlor S."/>
            <person name="Lee H.M."/>
            <person name="Leongamornlert D.A."/>
            <person name="Laird G."/>
            <person name="Lloyd C."/>
            <person name="Lloyd D.M."/>
            <person name="Loveland J."/>
            <person name="Lovell J."/>
            <person name="McLaren S."/>
            <person name="McLay K.E."/>
            <person name="McMurray A."/>
            <person name="Mashreghi-Mohammadi M."/>
            <person name="Matthews L."/>
            <person name="Milne S."/>
            <person name="Nickerson T."/>
            <person name="Nguyen M."/>
            <person name="Overton-Larty E."/>
            <person name="Palmer S.A."/>
            <person name="Pearce A.V."/>
            <person name="Peck A.I."/>
            <person name="Pelan S."/>
            <person name="Phillimore B."/>
            <person name="Porter K."/>
            <person name="Rice C.M."/>
            <person name="Rogosin A."/>
            <person name="Ross M.T."/>
            <person name="Sarafidou T."/>
            <person name="Sehra H.K."/>
            <person name="Shownkeen R."/>
            <person name="Skuce C.D."/>
            <person name="Smith M."/>
            <person name="Standring L."/>
            <person name="Sycamore N."/>
            <person name="Tester J."/>
            <person name="Thorpe A."/>
            <person name="Torcasso W."/>
            <person name="Tracey A."/>
            <person name="Tromans A."/>
            <person name="Tsolas J."/>
            <person name="Wall M."/>
            <person name="Walsh J."/>
            <person name="Wang H."/>
            <person name="Weinstock K."/>
            <person name="West A.P."/>
            <person name="Willey D.L."/>
            <person name="Whitehead S.L."/>
            <person name="Wilming L."/>
            <person name="Wray P.W."/>
            <person name="Young L."/>
            <person name="Chen Y."/>
            <person name="Lovering R.C."/>
            <person name="Moschonas N.K."/>
            <person name="Siebert R."/>
            <person name="Fechtel K."/>
            <person name="Bentley D."/>
            <person name="Durbin R.M."/>
            <person name="Hubbard T."/>
            <person name="Doucette-Stamm L."/>
            <person name="Beck S."/>
            <person name="Smith D.R."/>
            <person name="Rogers J."/>
        </authorList>
    </citation>
    <scope>NUCLEOTIDE SEQUENCE [LARGE SCALE GENOMIC DNA]</scope>
</reference>
<reference key="4">
    <citation type="journal article" date="2004" name="Genome Res.">
        <title>The status, quality, and expansion of the NIH full-length cDNA project: the Mammalian Gene Collection (MGC).</title>
        <authorList>
            <consortium name="The MGC Project Team"/>
        </authorList>
    </citation>
    <scope>NUCLEOTIDE SEQUENCE [LARGE SCALE MRNA]</scope>
</reference>
<reference key="5">
    <citation type="journal article" date="2009" name="Mol. Cell. Proteomics">
        <title>Large-scale proteomics analysis of the human kinome.</title>
        <authorList>
            <person name="Oppermann F.S."/>
            <person name="Gnad F."/>
            <person name="Olsen J.V."/>
            <person name="Hornberger R."/>
            <person name="Greff Z."/>
            <person name="Keri G."/>
            <person name="Mann M."/>
            <person name="Daub H."/>
        </authorList>
    </citation>
    <scope>IDENTIFICATION BY MASS SPECTROMETRY [LARGE SCALE ANALYSIS]</scope>
</reference>
<reference key="6">
    <citation type="journal article" date="2013" name="J. Proteome Res.">
        <title>Toward a comprehensive characterization of a human cancer cell phosphoproteome.</title>
        <authorList>
            <person name="Zhou H."/>
            <person name="Di Palma S."/>
            <person name="Preisinger C."/>
            <person name="Peng M."/>
            <person name="Polat A.N."/>
            <person name="Heck A.J."/>
            <person name="Mohammed S."/>
        </authorList>
    </citation>
    <scope>PHOSPHORYLATION [LARGE SCALE ANALYSIS] AT SER-604; SER-615; SER-800; SER-872 AND SER-901</scope>
    <scope>IDENTIFICATION BY MASS SPECTROMETRY [LARGE SCALE ANALYSIS]</scope>
    <source>
        <tissue>Erythroleukemia</tissue>
    </source>
</reference>
<reference key="7">
    <citation type="journal article" date="2014" name="J. Proteomics">
        <title>An enzyme assisted RP-RPLC approach for in-depth analysis of human liver phosphoproteome.</title>
        <authorList>
            <person name="Bian Y."/>
            <person name="Song C."/>
            <person name="Cheng K."/>
            <person name="Dong M."/>
            <person name="Wang F."/>
            <person name="Huang J."/>
            <person name="Sun D."/>
            <person name="Wang L."/>
            <person name="Ye M."/>
            <person name="Zou H."/>
        </authorList>
    </citation>
    <scope>PHOSPHORYLATION [LARGE SCALE ANALYSIS] AT SER-530; SER-681 AND SER-800</scope>
    <scope>IDENTIFICATION BY MASS SPECTROMETRY [LARGE SCALE ANALYSIS]</scope>
    <source>
        <tissue>Liver</tissue>
    </source>
</reference>
<reference key="8">
    <citation type="journal article" date="2015" name="Eur. J. Hum. Genet.">
        <title>A syndrome of congenital microcephaly, intellectual disability and dysmorphism with a homozygous mutation in FRMD4A.</title>
        <authorList>
            <person name="Fine D."/>
            <person name="Flusser H."/>
            <person name="Markus B."/>
            <person name="Shorer Z."/>
            <person name="Gradstein L."/>
            <person name="Khateeb S."/>
            <person name="Langer Y."/>
            <person name="Narkis G."/>
            <person name="Birk R."/>
            <person name="Galil A."/>
            <person name="Shelef I."/>
            <person name="Birk O.S."/>
        </authorList>
    </citation>
    <scope>INVOLVEMENT IN CCAFCA</scope>
</reference>
<reference key="9">
    <citation type="journal article" date="2016" name="J. Cell Sci.">
        <title>FRMD4A-cytohesin signaling modulates the cellular release of tau.</title>
        <authorList>
            <person name="Yan X."/>
            <person name="Nykaenen N.P."/>
            <person name="Brunello C.A."/>
            <person name="Haapasalo A."/>
            <person name="Hiltunen M."/>
            <person name="Uronen R.L."/>
            <person name="Huttunen H.J."/>
        </authorList>
    </citation>
    <scope>FUNCTION</scope>
</reference>
<protein>
    <recommendedName>
        <fullName>FERM domain-containing protein 4A</fullName>
    </recommendedName>
</protein>
<sequence length="1039" mass="115458">MAVQLVPDSALGLLMMTEGRRCQVHLLDDRKLELLVQPKLLAKELLDLVASHFNLKEKEYFGIAFTDETGHLNWLQLDRRVLEHDFPKKSGPVVLYFCVRFYIESISYLKDNATIELFFLNAKSCIYKELIDVDSEVVFELASYILQEAKGDFSSNEVVRSDLKKLPALPTQALKEHPSLAYCEDRVIEHYKKLNGQTRGQAIVNYMSIVESLPTYGVHYYAVKDKQGIPWWLGLSYKGIFQYDYHDKVKPRKIFQWRQLENLYFREKKFSVEVHDPRRASVTRRTFGHSGIAVHTWYACPALIKSIWAMAISQHQFYLDRKQSKSKIHAARSLSEIAIDLTETGTLKTSKLANMGSKGKIISGSSGSLLSSGSQESDSSQSAKKDMLAALKSRQEALEETLRQRLEELKKLCLREAELTGKLPVEYPLDPGEEPPIVRRRIGTAFKLDEQKILPKGEEAELERLEREFAIQSQITEAARRLASDPNVSKKLKKQRKTSYLNALKKLQEIENAINENRIKSGKKPTQRASLIIDDGNIASEDSSLSDALVLEDEDSQVTSTISPLHSPHKGLPPRPPSHNRPPPPQSLEGLRQMHYHRNDYDKSPIKPKMWSESSLDEPYEKVKKRSSHSHSSSHKRFPSTGSCAEAGGGSNSLQNSPIRGLPHWNSQSSMPSTPDLRVRSPHYVHSTRSVDISPTRLHSLALHFRHRSSSLESQGKLLGSENDTGSPDFYTPRTRSSNGSDPMDDCSSCTSHSSSEHYYPAQMNANYSTLAEDSPSKARQRQRQRQRAAGALGSASSGSMPNLAARGGAGGAGGAGGGVYLHSQSQPSSQYRIKEYPLYIEGGATPVVVRSLESDQEGHYSVKAQFKTSNSYTAGGLFKESWRGGGGDEGDTGRLTPSRSQILRTPSLGREGAHDKGAGRAAVSDELRQWYQRSTASHKEHSRLSHTSSTSSDSGSQYSTSSQSTFVAHSRVTRMPQMCKATSAALPQSQRSSTPSSEIGATPPSSPHHILTWQTGEATENSPILDGSESPPHQSTDE</sequence>
<keyword id="KW-0965">Cell junction</keyword>
<keyword id="KW-0175">Coiled coil</keyword>
<keyword id="KW-0963">Cytoplasm</keyword>
<keyword id="KW-0206">Cytoskeleton</keyword>
<keyword id="KW-0991">Intellectual disability</keyword>
<keyword id="KW-0597">Phosphoprotein</keyword>
<keyword id="KW-1267">Proteomics identification</keyword>
<keyword id="KW-1185">Reference proteome</keyword>
<keyword id="KW-0796">Tight junction</keyword>
<evidence type="ECO:0000250" key="1"/>
<evidence type="ECO:0000250" key="2">
    <source>
        <dbReference type="UniProtKB" id="Q8BIE6"/>
    </source>
</evidence>
<evidence type="ECO:0000255" key="3"/>
<evidence type="ECO:0000255" key="4">
    <source>
        <dbReference type="PROSITE-ProRule" id="PRU00084"/>
    </source>
</evidence>
<evidence type="ECO:0000256" key="5">
    <source>
        <dbReference type="SAM" id="MobiDB-lite"/>
    </source>
</evidence>
<evidence type="ECO:0000269" key="6">
    <source>
    </source>
</evidence>
<evidence type="ECO:0000269" key="7">
    <source>
    </source>
</evidence>
<evidence type="ECO:0000305" key="8"/>
<evidence type="ECO:0000312" key="9">
    <source>
        <dbReference type="HGNC" id="HGNC:25491"/>
    </source>
</evidence>
<evidence type="ECO:0007744" key="10">
    <source>
    </source>
</evidence>
<evidence type="ECO:0007744" key="11">
    <source>
    </source>
</evidence>
<organism>
    <name type="scientific">Homo sapiens</name>
    <name type="common">Human</name>
    <dbReference type="NCBI Taxonomy" id="9606"/>
    <lineage>
        <taxon>Eukaryota</taxon>
        <taxon>Metazoa</taxon>
        <taxon>Chordata</taxon>
        <taxon>Craniata</taxon>
        <taxon>Vertebrata</taxon>
        <taxon>Euteleostomi</taxon>
        <taxon>Mammalia</taxon>
        <taxon>Eutheria</taxon>
        <taxon>Euarchontoglires</taxon>
        <taxon>Primates</taxon>
        <taxon>Haplorrhini</taxon>
        <taxon>Catarrhini</taxon>
        <taxon>Hominidae</taxon>
        <taxon>Homo</taxon>
    </lineage>
</organism>
<name>FRM4A_HUMAN</name>